<name>CLU_MYCMD</name>
<feature type="chain" id="PRO_0000366415" description="Clustered mitochondria protein homolog">
    <location>
        <begin position="1"/>
        <end position="1404"/>
    </location>
</feature>
<feature type="domain" description="Clu" evidence="2">
    <location>
        <begin position="357"/>
        <end position="646"/>
    </location>
</feature>
<feature type="region of interest" description="Disordered" evidence="3">
    <location>
        <begin position="528"/>
        <end position="561"/>
    </location>
</feature>
<feature type="region of interest" description="Disordered" evidence="3">
    <location>
        <begin position="706"/>
        <end position="735"/>
    </location>
</feature>
<feature type="region of interest" description="Disordered" evidence="3">
    <location>
        <begin position="996"/>
        <end position="1046"/>
    </location>
</feature>
<feature type="region of interest" description="Disordered" evidence="3">
    <location>
        <begin position="1337"/>
        <end position="1372"/>
    </location>
</feature>
<feature type="compositionally biased region" description="Acidic residues" evidence="3">
    <location>
        <begin position="528"/>
        <end position="540"/>
    </location>
</feature>
<feature type="compositionally biased region" description="Basic and acidic residues" evidence="3">
    <location>
        <begin position="706"/>
        <end position="723"/>
    </location>
</feature>
<feature type="compositionally biased region" description="Low complexity" evidence="3">
    <location>
        <begin position="1021"/>
        <end position="1046"/>
    </location>
</feature>
<feature type="compositionally biased region" description="Low complexity" evidence="3">
    <location>
        <begin position="1358"/>
        <end position="1372"/>
    </location>
</feature>
<sequence length="1404" mass="153208">MDPVTQAPAPEGVDAPEIDESLQPFEINLYLPKRPLIPSAAASANGLPETPSPLKVAVTPQETLNDLRVTITDSPEGYWLGAFCFRKPLASPNSTAKGGKVQLGERVPEWTELREIFEGVDKDKRELHVTHVPFNEADARAHVQRLRDLLSGGAADPSAIGVDAALSVQDAVRNPQEWQQDAARQNANGRAVTKKGVNDAAEASSELPLPLVDWAGWPSVTSIDLIPQVARRPRQLPVCVRQLSLASWNPPPQHCKLNGHLLYLQVGTLEGEVIFVTASTHGFYVNRSSGARFDPSPRPDGQDFASCSLFDLLCGFSPLFLSSFSKLFNDPLSSRDYFSAVPVTNALPAFPWLARNHTHHADALRSQAAFLLTGATSADALEGTRDWNDELQSARELPRTTLSERLMRDRVLNRIYSEFTQAAARAIPKVAAGEVQAMNPMDKRDAQMFIVNNLFISKGADGVDLYPHMGGDEAAHVAVGKDVQGVKTLNSLDVGGLCLLGTIVVDWKGERWVAQSVVPGLFRRRDDADELPEADGETTELAEAAPEKKSPEAKLAQSNKADLNDDTQVVYGGVEGPEVIRDNAAFHKLFHQVAQTLHLNEHQVEDAKGIKHSLWLSVDSKGLRGADGRRYVLDLARLNPVDINWLENDIDGAIHGSSSSPNQDAHYPHRMTLLRPELLEIYWDSEFRKWARAKLAARQEAKAAKDAKAKEAASKEDGEKTEAPEVEAEEPERLDSSEFKLTFNPDAFVEFKVADTLAEEHSKVITPITDESDASIAAVRQASDFLRKVAIPRFVTDVAAGLFTAADGGALSRQMHARGINVRYLGYVARLCSPEAKQELDQELIQKAGPGHEGFLNAFRLTVLQEMVLRASKRVLRGLIRDVEQVNVAACVSHFLNCLVGDKVNAHPKARPSVTPLSDVADAAWTKLTPETLREELKAEIRKRFRFELPASFFEQELRRAQLLREVALRTGIQLQLQEYVLEGKLADADGVVSDGCHGESQTNGNTTNKKNSKGKKKGGNEQQNGVKKSNVGAAAAKPTKAARATSFEPEDVLNLVPMVKDSTPKSTLAEEAFEAGRISISRGDRELGLELLLEGVSFHEQVYGLVHPEVARCYALFATIVHHLAGVAAMERAESINQAKSENKEITEADLPVVNEHLSMANAVRYQRQAVTVSERTLGLDHPETLNQYMNLAVLERSAGNTRESLLCQRRVLELWSLLHGQHHPDCINALSNVALTLQNARLFEASLRVYRSAHELALTLFGADSIHTANLAHELSQAYTLAGDLKTALAVEKEAWRVFEERLGKDDAQTKESEAFCSSLAASAVRVAKLEKEASERQARLPASRRGNSNAGGGAAAITGAGTTASGNGTANKSLDEIVRFIQGGSNGSVAKAKGKSKASRK</sequence>
<evidence type="ECO:0000255" key="1">
    <source>
        <dbReference type="HAMAP-Rule" id="MF_03013"/>
    </source>
</evidence>
<evidence type="ECO:0000255" key="2">
    <source>
        <dbReference type="PROSITE-ProRule" id="PRU01167"/>
    </source>
</evidence>
<evidence type="ECO:0000256" key="3">
    <source>
        <dbReference type="SAM" id="MobiDB-lite"/>
    </source>
</evidence>
<organism>
    <name type="scientific">Mycosarcoma maydis</name>
    <name type="common">Corn smut fungus</name>
    <name type="synonym">Ustilago maydis</name>
    <dbReference type="NCBI Taxonomy" id="5270"/>
    <lineage>
        <taxon>Eukaryota</taxon>
        <taxon>Fungi</taxon>
        <taxon>Dikarya</taxon>
        <taxon>Basidiomycota</taxon>
        <taxon>Ustilaginomycotina</taxon>
        <taxon>Ustilaginomycetes</taxon>
        <taxon>Ustilaginales</taxon>
        <taxon>Ustilaginaceae</taxon>
        <taxon>Mycosarcoma</taxon>
    </lineage>
</organism>
<reference key="1">
    <citation type="journal article" date="2006" name="Nature">
        <title>Insights from the genome of the biotrophic fungal plant pathogen Ustilago maydis.</title>
        <authorList>
            <person name="Kaemper J."/>
            <person name="Kahmann R."/>
            <person name="Boelker M."/>
            <person name="Ma L.-J."/>
            <person name="Brefort T."/>
            <person name="Saville B.J."/>
            <person name="Banuett F."/>
            <person name="Kronstad J.W."/>
            <person name="Gold S.E."/>
            <person name="Mueller O."/>
            <person name="Perlin M.H."/>
            <person name="Woesten H.A.B."/>
            <person name="de Vries R."/>
            <person name="Ruiz-Herrera J."/>
            <person name="Reynaga-Pena C.G."/>
            <person name="Snetselaar K."/>
            <person name="McCann M."/>
            <person name="Perez-Martin J."/>
            <person name="Feldbruegge M."/>
            <person name="Basse C.W."/>
            <person name="Steinberg G."/>
            <person name="Ibeas J.I."/>
            <person name="Holloman W."/>
            <person name="Guzman P."/>
            <person name="Farman M.L."/>
            <person name="Stajich J.E."/>
            <person name="Sentandreu R."/>
            <person name="Gonzalez-Prieto J.M."/>
            <person name="Kennell J.C."/>
            <person name="Molina L."/>
            <person name="Schirawski J."/>
            <person name="Mendoza-Mendoza A."/>
            <person name="Greilinger D."/>
            <person name="Muench K."/>
            <person name="Roessel N."/>
            <person name="Scherer M."/>
            <person name="Vranes M."/>
            <person name="Ladendorf O."/>
            <person name="Vincon V."/>
            <person name="Fuchs U."/>
            <person name="Sandrock B."/>
            <person name="Meng S."/>
            <person name="Ho E.C.H."/>
            <person name="Cahill M.J."/>
            <person name="Boyce K.J."/>
            <person name="Klose J."/>
            <person name="Klosterman S.J."/>
            <person name="Deelstra H.J."/>
            <person name="Ortiz-Castellanos L."/>
            <person name="Li W."/>
            <person name="Sanchez-Alonso P."/>
            <person name="Schreier P.H."/>
            <person name="Haeuser-Hahn I."/>
            <person name="Vaupel M."/>
            <person name="Koopmann E."/>
            <person name="Friedrich G."/>
            <person name="Voss H."/>
            <person name="Schlueter T."/>
            <person name="Margolis J."/>
            <person name="Platt D."/>
            <person name="Swimmer C."/>
            <person name="Gnirke A."/>
            <person name="Chen F."/>
            <person name="Vysotskaia V."/>
            <person name="Mannhaupt G."/>
            <person name="Gueldener U."/>
            <person name="Muensterkoetter M."/>
            <person name="Haase D."/>
            <person name="Oesterheld M."/>
            <person name="Mewes H.-W."/>
            <person name="Mauceli E.W."/>
            <person name="DeCaprio D."/>
            <person name="Wade C.M."/>
            <person name="Butler J."/>
            <person name="Young S.K."/>
            <person name="Jaffe D.B."/>
            <person name="Calvo S.E."/>
            <person name="Nusbaum C."/>
            <person name="Galagan J.E."/>
            <person name="Birren B.W."/>
        </authorList>
    </citation>
    <scope>NUCLEOTIDE SEQUENCE [LARGE SCALE GENOMIC DNA]</scope>
    <source>
        <strain>DSM 14603 / FGSC 9021 / UM521</strain>
    </source>
</reference>
<reference key="2">
    <citation type="submission" date="2014-09" db="EMBL/GenBank/DDBJ databases">
        <authorList>
            <person name="Gueldener U."/>
            <person name="Muensterkoetter M."/>
            <person name="Walter M.C."/>
            <person name="Mannhaupt G."/>
            <person name="Kahmann R."/>
        </authorList>
    </citation>
    <scope>GENOME REANNOTATION</scope>
    <source>
        <strain>DSM 14603 / FGSC 9021 / UM521</strain>
    </source>
</reference>
<protein>
    <recommendedName>
        <fullName evidence="1">Clustered mitochondria protein homolog</fullName>
    </recommendedName>
    <alternativeName>
        <fullName evidence="1">Protein TIF31 homolog</fullName>
    </alternativeName>
</protein>
<dbReference type="EMBL" id="CM003146">
    <property type="protein sequence ID" value="KIS69034.1"/>
    <property type="molecule type" value="Genomic_DNA"/>
</dbReference>
<dbReference type="RefSeq" id="XP_011389394.1">
    <property type="nucleotide sequence ID" value="XM_011391092.1"/>
</dbReference>
<dbReference type="SMR" id="Q4PA50"/>
<dbReference type="FunCoup" id="Q4PA50">
    <property type="interactions" value="425"/>
</dbReference>
<dbReference type="STRING" id="237631.Q4PA50"/>
<dbReference type="EnsemblFungi" id="KIS69034">
    <property type="protein sequence ID" value="KIS69034"/>
    <property type="gene ID" value="UMAG_03013"/>
</dbReference>
<dbReference type="KEGG" id="uma:UMAG_03013"/>
<dbReference type="VEuPathDB" id="FungiDB:UMAG_03013"/>
<dbReference type="eggNOG" id="KOG1839">
    <property type="taxonomic scope" value="Eukaryota"/>
</dbReference>
<dbReference type="HOGENOM" id="CLU_003256_2_0_1"/>
<dbReference type="InParanoid" id="Q4PA50"/>
<dbReference type="OMA" id="HPVWDKD"/>
<dbReference type="OrthoDB" id="771227at2759"/>
<dbReference type="Proteomes" id="UP000000561">
    <property type="component" value="Chromosome 7"/>
</dbReference>
<dbReference type="GO" id="GO:0005737">
    <property type="term" value="C:cytoplasm"/>
    <property type="evidence" value="ECO:0000318"/>
    <property type="project" value="GO_Central"/>
</dbReference>
<dbReference type="GO" id="GO:0003729">
    <property type="term" value="F:mRNA binding"/>
    <property type="evidence" value="ECO:0000318"/>
    <property type="project" value="GO_Central"/>
</dbReference>
<dbReference type="GO" id="GO:0048312">
    <property type="term" value="P:intracellular distribution of mitochondria"/>
    <property type="evidence" value="ECO:0000318"/>
    <property type="project" value="GO_Central"/>
</dbReference>
<dbReference type="GO" id="GO:0007005">
    <property type="term" value="P:mitochondrion organization"/>
    <property type="evidence" value="ECO:0007669"/>
    <property type="project" value="UniProtKB-UniRule"/>
</dbReference>
<dbReference type="CDD" id="cd15466">
    <property type="entry name" value="CLU-central"/>
    <property type="match status" value="1"/>
</dbReference>
<dbReference type="Gene3D" id="1.25.40.10">
    <property type="entry name" value="Tetratricopeptide repeat domain"/>
    <property type="match status" value="1"/>
</dbReference>
<dbReference type="HAMAP" id="MF_03013">
    <property type="entry name" value="CLU"/>
    <property type="match status" value="1"/>
</dbReference>
<dbReference type="InterPro" id="IPR033646">
    <property type="entry name" value="CLU-central"/>
</dbReference>
<dbReference type="InterPro" id="IPR025697">
    <property type="entry name" value="CLU_dom"/>
</dbReference>
<dbReference type="InterPro" id="IPR028275">
    <property type="entry name" value="CLU_N"/>
</dbReference>
<dbReference type="InterPro" id="IPR027523">
    <property type="entry name" value="CLU_prot"/>
</dbReference>
<dbReference type="InterPro" id="IPR023231">
    <property type="entry name" value="GSKIP_dom_sf"/>
</dbReference>
<dbReference type="InterPro" id="IPR011990">
    <property type="entry name" value="TPR-like_helical_dom_sf"/>
</dbReference>
<dbReference type="PANTHER" id="PTHR12601:SF6">
    <property type="entry name" value="CLUSTERED MITOCHONDRIA PROTEIN HOMOLOG"/>
    <property type="match status" value="1"/>
</dbReference>
<dbReference type="PANTHER" id="PTHR12601">
    <property type="entry name" value="EUKARYOTIC TRANSLATION INITIATION FACTOR 3 SUBUNIT EIF-3"/>
    <property type="match status" value="1"/>
</dbReference>
<dbReference type="Pfam" id="PF13236">
    <property type="entry name" value="CLU"/>
    <property type="match status" value="1"/>
</dbReference>
<dbReference type="Pfam" id="PF15044">
    <property type="entry name" value="CLU_N"/>
    <property type="match status" value="1"/>
</dbReference>
<dbReference type="Pfam" id="PF12807">
    <property type="entry name" value="eIF3_p135"/>
    <property type="match status" value="1"/>
</dbReference>
<dbReference type="Pfam" id="PF13374">
    <property type="entry name" value="TPR_10"/>
    <property type="match status" value="2"/>
</dbReference>
<dbReference type="Pfam" id="PF13424">
    <property type="entry name" value="TPR_12"/>
    <property type="match status" value="1"/>
</dbReference>
<dbReference type="SUPFAM" id="SSF103107">
    <property type="entry name" value="Hypothetical protein c14orf129, hspc210"/>
    <property type="match status" value="1"/>
</dbReference>
<dbReference type="SUPFAM" id="SSF48452">
    <property type="entry name" value="TPR-like"/>
    <property type="match status" value="1"/>
</dbReference>
<dbReference type="PROSITE" id="PS51823">
    <property type="entry name" value="CLU"/>
    <property type="match status" value="1"/>
</dbReference>
<comment type="function">
    <text evidence="1">mRNA-binding protein involved in proper cytoplasmic distribution of mitochondria.</text>
</comment>
<comment type="subunit">
    <text evidence="1">May associate with the eukaryotic translation initiation factor 3 (eIF-3) complex.</text>
</comment>
<comment type="subcellular location">
    <subcellularLocation>
        <location evidence="1">Cytoplasm</location>
    </subcellularLocation>
</comment>
<comment type="similarity">
    <text evidence="1">Belongs to the CLU family.</text>
</comment>
<gene>
    <name evidence="1" type="primary">CLU1</name>
</gene>
<keyword id="KW-0963">Cytoplasm</keyword>
<keyword id="KW-1185">Reference proteome</keyword>
<proteinExistence type="inferred from homology"/>
<accession>Q4PA50</accession>
<accession>A0A0D1DY64</accession>